<feature type="chain" id="PRO_1000084529" description="Ribosome maturation factor RimP">
    <location>
        <begin position="1"/>
        <end position="153"/>
    </location>
</feature>
<dbReference type="EMBL" id="CP000749">
    <property type="protein sequence ID" value="ABR69956.1"/>
    <property type="molecule type" value="Genomic_DNA"/>
</dbReference>
<dbReference type="SMR" id="A6VU27"/>
<dbReference type="STRING" id="400668.Mmwyl1_1025"/>
<dbReference type="KEGG" id="mmw:Mmwyl1_1025"/>
<dbReference type="eggNOG" id="COG0779">
    <property type="taxonomic scope" value="Bacteria"/>
</dbReference>
<dbReference type="HOGENOM" id="CLU_070525_1_1_6"/>
<dbReference type="OrthoDB" id="9805006at2"/>
<dbReference type="GO" id="GO:0005829">
    <property type="term" value="C:cytosol"/>
    <property type="evidence" value="ECO:0007669"/>
    <property type="project" value="TreeGrafter"/>
</dbReference>
<dbReference type="GO" id="GO:0000028">
    <property type="term" value="P:ribosomal small subunit assembly"/>
    <property type="evidence" value="ECO:0007669"/>
    <property type="project" value="TreeGrafter"/>
</dbReference>
<dbReference type="GO" id="GO:0006412">
    <property type="term" value="P:translation"/>
    <property type="evidence" value="ECO:0007669"/>
    <property type="project" value="TreeGrafter"/>
</dbReference>
<dbReference type="CDD" id="cd01734">
    <property type="entry name" value="YlxS_C"/>
    <property type="match status" value="1"/>
</dbReference>
<dbReference type="FunFam" id="3.30.300.70:FF:000001">
    <property type="entry name" value="Ribosome maturation factor RimP"/>
    <property type="match status" value="1"/>
</dbReference>
<dbReference type="Gene3D" id="2.30.30.180">
    <property type="entry name" value="Ribosome maturation factor RimP, C-terminal domain"/>
    <property type="match status" value="1"/>
</dbReference>
<dbReference type="Gene3D" id="3.30.300.70">
    <property type="entry name" value="RimP-like superfamily, N-terminal"/>
    <property type="match status" value="1"/>
</dbReference>
<dbReference type="HAMAP" id="MF_01077">
    <property type="entry name" value="RimP"/>
    <property type="match status" value="1"/>
</dbReference>
<dbReference type="InterPro" id="IPR003728">
    <property type="entry name" value="Ribosome_maturation_RimP"/>
</dbReference>
<dbReference type="InterPro" id="IPR028998">
    <property type="entry name" value="RimP_C"/>
</dbReference>
<dbReference type="InterPro" id="IPR036847">
    <property type="entry name" value="RimP_C_sf"/>
</dbReference>
<dbReference type="InterPro" id="IPR028989">
    <property type="entry name" value="RimP_N"/>
</dbReference>
<dbReference type="InterPro" id="IPR035956">
    <property type="entry name" value="RimP_N_sf"/>
</dbReference>
<dbReference type="NCBIfam" id="NF000927">
    <property type="entry name" value="PRK00092.1-1"/>
    <property type="match status" value="1"/>
</dbReference>
<dbReference type="PANTHER" id="PTHR33867">
    <property type="entry name" value="RIBOSOME MATURATION FACTOR RIMP"/>
    <property type="match status" value="1"/>
</dbReference>
<dbReference type="PANTHER" id="PTHR33867:SF1">
    <property type="entry name" value="RIBOSOME MATURATION FACTOR RIMP"/>
    <property type="match status" value="1"/>
</dbReference>
<dbReference type="Pfam" id="PF17384">
    <property type="entry name" value="DUF150_C"/>
    <property type="match status" value="1"/>
</dbReference>
<dbReference type="Pfam" id="PF02576">
    <property type="entry name" value="RimP_N"/>
    <property type="match status" value="1"/>
</dbReference>
<dbReference type="SUPFAM" id="SSF74942">
    <property type="entry name" value="YhbC-like, C-terminal domain"/>
    <property type="match status" value="1"/>
</dbReference>
<dbReference type="SUPFAM" id="SSF75420">
    <property type="entry name" value="YhbC-like, N-terminal domain"/>
    <property type="match status" value="1"/>
</dbReference>
<gene>
    <name evidence="1" type="primary">rimP</name>
    <name type="ordered locus">Mmwyl1_1025</name>
</gene>
<accession>A6VU27</accession>
<proteinExistence type="inferred from homology"/>
<name>RIMP_MARMS</name>
<reference key="1">
    <citation type="submission" date="2007-06" db="EMBL/GenBank/DDBJ databases">
        <title>Complete sequence of Marinomonas sp. MWYL1.</title>
        <authorList>
            <consortium name="US DOE Joint Genome Institute"/>
            <person name="Copeland A."/>
            <person name="Lucas S."/>
            <person name="Lapidus A."/>
            <person name="Barry K."/>
            <person name="Glavina del Rio T."/>
            <person name="Dalin E."/>
            <person name="Tice H."/>
            <person name="Pitluck S."/>
            <person name="Kiss H."/>
            <person name="Brettin T."/>
            <person name="Bruce D."/>
            <person name="Detter J.C."/>
            <person name="Han C."/>
            <person name="Schmutz J."/>
            <person name="Larimer F."/>
            <person name="Land M."/>
            <person name="Hauser L."/>
            <person name="Kyrpides N."/>
            <person name="Kim E."/>
            <person name="Johnston A.W.B."/>
            <person name="Todd J.D."/>
            <person name="Rogers R."/>
            <person name="Wexler M."/>
            <person name="Bond P.L."/>
            <person name="Li Y."/>
            <person name="Richardson P."/>
        </authorList>
    </citation>
    <scope>NUCLEOTIDE SEQUENCE [LARGE SCALE GENOMIC DNA]</scope>
    <source>
        <strain>MWYL1</strain>
    </source>
</reference>
<comment type="function">
    <text evidence="1">Required for maturation of 30S ribosomal subunits.</text>
</comment>
<comment type="subcellular location">
    <subcellularLocation>
        <location evidence="1">Cytoplasm</location>
    </subcellularLocation>
</comment>
<comment type="similarity">
    <text evidence="1">Belongs to the RimP family.</text>
</comment>
<protein>
    <recommendedName>
        <fullName evidence="1">Ribosome maturation factor RimP</fullName>
    </recommendedName>
</protein>
<keyword id="KW-0963">Cytoplasm</keyword>
<keyword id="KW-0690">Ribosome biogenesis</keyword>
<organism>
    <name type="scientific">Marinomonas sp. (strain MWYL1)</name>
    <dbReference type="NCBI Taxonomy" id="400668"/>
    <lineage>
        <taxon>Bacteria</taxon>
        <taxon>Pseudomonadati</taxon>
        <taxon>Pseudomonadota</taxon>
        <taxon>Gammaproteobacteria</taxon>
        <taxon>Oceanospirillales</taxon>
        <taxon>Oceanospirillaceae</taxon>
        <taxon>Marinomonas</taxon>
    </lineage>
</organism>
<sequence>MSAKYTILEELIRPVVEGLGFEFWGMEYLSLGKDSVLRIYIETDAEKGIDVEDCARVSRQVSSILDVEDPITGEYNLEVSSPGLDRPLFSLAQYQAYIGSIVSLRLRVPFDGRRKFKGQLMGIESEDIVIRVDQEEYLLPIDLIDKANVVPQF</sequence>
<evidence type="ECO:0000255" key="1">
    <source>
        <dbReference type="HAMAP-Rule" id="MF_01077"/>
    </source>
</evidence>